<comment type="subcellular location">
    <subcellularLocation>
        <location evidence="2">Secreted</location>
    </subcellularLocation>
</comment>
<comment type="PTM">
    <text evidence="1">The C-terminal propeptide is autocleaved.</text>
</comment>
<comment type="similarity">
    <text evidence="8">Belongs to the peptidase S8 family.</text>
</comment>
<evidence type="ECO:0000250" key="1">
    <source>
        <dbReference type="UniProtKB" id="Q39547"/>
    </source>
</evidence>
<evidence type="ECO:0000250" key="2">
    <source>
        <dbReference type="UniProtKB" id="Q84WS0"/>
    </source>
</evidence>
<evidence type="ECO:0000255" key="3"/>
<evidence type="ECO:0000255" key="4">
    <source>
        <dbReference type="PROSITE-ProRule" id="PRU00498"/>
    </source>
</evidence>
<evidence type="ECO:0000255" key="5">
    <source>
        <dbReference type="PROSITE-ProRule" id="PRU01240"/>
    </source>
</evidence>
<evidence type="ECO:0000255" key="6">
    <source>
        <dbReference type="PROSITE-ProRule" id="PRU10082"/>
    </source>
</evidence>
<evidence type="ECO:0000303" key="7">
    <source>
    </source>
</evidence>
<evidence type="ECO:0000305" key="8"/>
<evidence type="ECO:0000312" key="9">
    <source>
        <dbReference type="Araport" id="AT5G03620"/>
    </source>
</evidence>
<evidence type="ECO:0000312" key="10">
    <source>
        <dbReference type="EMBL" id="CAB82927.1"/>
    </source>
</evidence>
<feature type="signal peptide" evidence="3">
    <location>
        <begin position="1"/>
        <end position="23"/>
    </location>
</feature>
<feature type="propeptide" id="PRO_0000435253" description="Activation peptide" evidence="1">
    <location>
        <begin position="24"/>
        <end position="113"/>
    </location>
</feature>
<feature type="chain" id="PRO_5004329362" description="Subtilisin-like protease SBT4.15" evidence="3">
    <location>
        <begin position="114"/>
        <end status="unknown"/>
    </location>
</feature>
<feature type="propeptide" id="PRO_0000435254" evidence="1">
    <location>
        <begin status="unknown"/>
        <end position="766"/>
    </location>
</feature>
<feature type="domain" description="Inhibitor I9" evidence="3">
    <location>
        <begin position="35"/>
        <end position="113"/>
    </location>
</feature>
<feature type="domain" description="Peptidase S8" evidence="5">
    <location>
        <begin position="117"/>
        <end position="601"/>
    </location>
</feature>
<feature type="domain" description="PA" evidence="3">
    <location>
        <begin position="365"/>
        <end position="460"/>
    </location>
</feature>
<feature type="active site" description="Charge relay system" evidence="5">
    <location>
        <position position="144"/>
    </location>
</feature>
<feature type="active site" description="Charge relay system" evidence="5">
    <location>
        <position position="210"/>
    </location>
</feature>
<feature type="active site" description="Charge relay system" evidence="5">
    <location>
        <position position="543"/>
    </location>
</feature>
<feature type="glycosylation site" description="N-linked (GlcNAc...) asparagine" evidence="4">
    <location>
        <position position="175"/>
    </location>
</feature>
<feature type="glycosylation site" description="N-linked (GlcNAc...) asparagine" evidence="4">
    <location>
        <position position="233"/>
    </location>
</feature>
<feature type="glycosylation site" description="N-linked (GlcNAc...) asparagine" evidence="4">
    <location>
        <position position="376"/>
    </location>
</feature>
<feature type="glycosylation site" description="N-linked (GlcNAc...) asparagine" evidence="4">
    <location>
        <position position="465"/>
    </location>
</feature>
<feature type="glycosylation site" description="N-linked (GlcNAc...) asparagine" evidence="4">
    <location>
        <position position="624"/>
    </location>
</feature>
<feature type="glycosylation site" description="N-linked (GlcNAc...) asparagine" evidence="4">
    <location>
        <position position="638"/>
    </location>
</feature>
<feature type="glycosylation site" description="N-linked (GlcNAc...) asparagine" evidence="4">
    <location>
        <position position="668"/>
    </location>
</feature>
<accession>Q9LZS6</accession>
<protein>
    <recommendedName>
        <fullName evidence="7">Subtilisin-like protease SBT4.15</fullName>
        <ecNumber evidence="6">3.4.21.-</ecNumber>
    </recommendedName>
    <alternativeName>
        <fullName evidence="7">Subtilase subfamily 4 member 15</fullName>
        <shortName evidence="7">AtSBT4.15</shortName>
    </alternativeName>
</protein>
<proteinExistence type="inferred from homology"/>
<gene>
    <name evidence="7" type="primary">SBT4.15</name>
    <name evidence="9" type="ordered locus">At5g03620</name>
    <name evidence="10" type="ORF">F17C15.40</name>
</gene>
<reference key="1">
    <citation type="journal article" date="2000" name="Nature">
        <title>Sequence and analysis of chromosome 5 of the plant Arabidopsis thaliana.</title>
        <authorList>
            <person name="Tabata S."/>
            <person name="Kaneko T."/>
            <person name="Nakamura Y."/>
            <person name="Kotani H."/>
            <person name="Kato T."/>
            <person name="Asamizu E."/>
            <person name="Miyajima N."/>
            <person name="Sasamoto S."/>
            <person name="Kimura T."/>
            <person name="Hosouchi T."/>
            <person name="Kawashima K."/>
            <person name="Kohara M."/>
            <person name="Matsumoto M."/>
            <person name="Matsuno A."/>
            <person name="Muraki A."/>
            <person name="Nakayama S."/>
            <person name="Nakazaki N."/>
            <person name="Naruo K."/>
            <person name="Okumura S."/>
            <person name="Shinpo S."/>
            <person name="Takeuchi C."/>
            <person name="Wada T."/>
            <person name="Watanabe A."/>
            <person name="Yamada M."/>
            <person name="Yasuda M."/>
            <person name="Sato S."/>
            <person name="de la Bastide M."/>
            <person name="Huang E."/>
            <person name="Spiegel L."/>
            <person name="Gnoj L."/>
            <person name="O'Shaughnessy A."/>
            <person name="Preston R."/>
            <person name="Habermann K."/>
            <person name="Murray J."/>
            <person name="Johnson D."/>
            <person name="Rohlfing T."/>
            <person name="Nelson J."/>
            <person name="Stoneking T."/>
            <person name="Pepin K."/>
            <person name="Spieth J."/>
            <person name="Sekhon M."/>
            <person name="Armstrong J."/>
            <person name="Becker M."/>
            <person name="Belter E."/>
            <person name="Cordum H."/>
            <person name="Cordes M."/>
            <person name="Courtney L."/>
            <person name="Courtney W."/>
            <person name="Dante M."/>
            <person name="Du H."/>
            <person name="Edwards J."/>
            <person name="Fryman J."/>
            <person name="Haakensen B."/>
            <person name="Lamar E."/>
            <person name="Latreille P."/>
            <person name="Leonard S."/>
            <person name="Meyer R."/>
            <person name="Mulvaney E."/>
            <person name="Ozersky P."/>
            <person name="Riley A."/>
            <person name="Strowmatt C."/>
            <person name="Wagner-McPherson C."/>
            <person name="Wollam A."/>
            <person name="Yoakum M."/>
            <person name="Bell M."/>
            <person name="Dedhia N."/>
            <person name="Parnell L."/>
            <person name="Shah R."/>
            <person name="Rodriguez M."/>
            <person name="Hoon See L."/>
            <person name="Vil D."/>
            <person name="Baker J."/>
            <person name="Kirchoff K."/>
            <person name="Toth K."/>
            <person name="King L."/>
            <person name="Bahret A."/>
            <person name="Miller B."/>
            <person name="Marra M.A."/>
            <person name="Martienssen R."/>
            <person name="McCombie W.R."/>
            <person name="Wilson R.K."/>
            <person name="Murphy G."/>
            <person name="Bancroft I."/>
            <person name="Volckaert G."/>
            <person name="Wambutt R."/>
            <person name="Duesterhoeft A."/>
            <person name="Stiekema W."/>
            <person name="Pohl T."/>
            <person name="Entian K.-D."/>
            <person name="Terryn N."/>
            <person name="Hartley N."/>
            <person name="Bent E."/>
            <person name="Johnson S."/>
            <person name="Langham S.-A."/>
            <person name="McCullagh B."/>
            <person name="Robben J."/>
            <person name="Grymonprez B."/>
            <person name="Zimmermann W."/>
            <person name="Ramsperger U."/>
            <person name="Wedler H."/>
            <person name="Balke K."/>
            <person name="Wedler E."/>
            <person name="Peters S."/>
            <person name="van Staveren M."/>
            <person name="Dirkse W."/>
            <person name="Mooijman P."/>
            <person name="Klein Lankhorst R."/>
            <person name="Weitzenegger T."/>
            <person name="Bothe G."/>
            <person name="Rose M."/>
            <person name="Hauf J."/>
            <person name="Berneiser S."/>
            <person name="Hempel S."/>
            <person name="Feldpausch M."/>
            <person name="Lamberth S."/>
            <person name="Villarroel R."/>
            <person name="Gielen J."/>
            <person name="Ardiles W."/>
            <person name="Bents O."/>
            <person name="Lemcke K."/>
            <person name="Kolesov G."/>
            <person name="Mayer K.F.X."/>
            <person name="Rudd S."/>
            <person name="Schoof H."/>
            <person name="Schueller C."/>
            <person name="Zaccaria P."/>
            <person name="Mewes H.-W."/>
            <person name="Bevan M."/>
            <person name="Fransz P.F."/>
        </authorList>
    </citation>
    <scope>NUCLEOTIDE SEQUENCE [LARGE SCALE GENOMIC DNA]</scope>
    <source>
        <strain>cv. Columbia</strain>
    </source>
</reference>
<reference key="2">
    <citation type="journal article" date="2017" name="Plant J.">
        <title>Araport11: a complete reannotation of the Arabidopsis thaliana reference genome.</title>
        <authorList>
            <person name="Cheng C.Y."/>
            <person name="Krishnakumar V."/>
            <person name="Chan A.P."/>
            <person name="Thibaud-Nissen F."/>
            <person name="Schobel S."/>
            <person name="Town C.D."/>
        </authorList>
    </citation>
    <scope>GENOME REANNOTATION</scope>
    <source>
        <strain>cv. Columbia</strain>
    </source>
</reference>
<reference key="3">
    <citation type="journal article" date="2005" name="PLoS Comput. Biol.">
        <title>Inferring hypotheses on functional relationships of genes: Analysis of the Arabidopsis thaliana subtilase gene family.</title>
        <authorList>
            <person name="Rautengarten C."/>
            <person name="Steinhauser D."/>
            <person name="Bussis D."/>
            <person name="Stintzi A."/>
            <person name="Schaller A."/>
            <person name="Kopka J."/>
            <person name="Altmann T."/>
        </authorList>
    </citation>
    <scope>GENE FAMILY</scope>
    <scope>NOMENCLATURE</scope>
</reference>
<sequence length="766" mass="82595">MVSNQRVRLFMLCFCLVNNAVIAATEDENVERKPYIVYMGEATENSLVEAAENHHNLLMTVIGDESKARELKIYSYGKNINGFVARLFPHEAEKLSREEGVVSVFKNTQRQLHTTRSWDFLGLVESKYKRSVGIESNIIVGVLDTGIDVESPSFNDKGVGPPPAKWKGKCVTGNNFTRCNNKVIGAKYFHIQSEGLPDGEGDTAADHDGHGTHTSSTIAGVSVSSASLFGIANGTARGGVPSARIAAYKVCWDSGCTDMDMLAAFDEAISDGVDIISISIGGASLPFFEDPIAIGAFHAMKRGILTTCSAGNNGPGLFTVSNLAPWVMTVAANSLDRKFETVVKLGNGLTASGISLNGFNPRKKMYPLTSGSLASNLSAGGYGEPSTCEPGTLGEDKVMGKVVYCEAGREEGGNGGQGQDHVVRSLKGAGVIVQLLEPTDMATSTLIAGSYVFFEDGTKITEYINSTKNPQAVIFKTKTTKMLAPSISSFSARGPQRISPNILKPDISAPGLNILAAYSKLASVTGYPDDNRRTLFSIMSGTSMACPHAAAAAAYVKSFHPDWSPAAIKSALMTTATPMRIKGNEAELSYGSGQINPRRAIHPGLVYDITEDAYLRFLCKEGYNSTSIGLLTGDNSNNTTKKEYNCENIKRGLGSDGLNYPSLHKQVNSTEAKVSEVFYRTVTNVGYGPSTYVARVWAPKGLRVEVVPKVMSFERPKEKRNFKVVIDGVWDETMKGIVSASVEWDDSRGHLVRSPILLFRSDNDYR</sequence>
<name>SBT4F_ARATH</name>
<dbReference type="EC" id="3.4.21.-" evidence="6"/>
<dbReference type="EMBL" id="AL162506">
    <property type="protein sequence ID" value="CAB82927.1"/>
    <property type="molecule type" value="Genomic_DNA"/>
</dbReference>
<dbReference type="EMBL" id="CP002688">
    <property type="protein sequence ID" value="AED90634.1"/>
    <property type="molecule type" value="Genomic_DNA"/>
</dbReference>
<dbReference type="PIR" id="T48389">
    <property type="entry name" value="T48389"/>
</dbReference>
<dbReference type="RefSeq" id="NP_568124.1">
    <property type="nucleotide sequence ID" value="NM_120443.2"/>
</dbReference>
<dbReference type="SMR" id="Q9LZS6"/>
<dbReference type="FunCoup" id="Q9LZS6">
    <property type="interactions" value="14"/>
</dbReference>
<dbReference type="STRING" id="3702.Q9LZS6"/>
<dbReference type="MEROPS" id="S08.A13"/>
<dbReference type="GlyCosmos" id="Q9LZS6">
    <property type="glycosylation" value="7 sites, No reported glycans"/>
</dbReference>
<dbReference type="GlyGen" id="Q9LZS6">
    <property type="glycosylation" value="7 sites"/>
</dbReference>
<dbReference type="iPTMnet" id="Q9LZS6"/>
<dbReference type="PaxDb" id="3702-AT5G03620.1"/>
<dbReference type="ProteomicsDB" id="232737"/>
<dbReference type="EnsemblPlants" id="AT5G03620.1">
    <property type="protein sequence ID" value="AT5G03620.1"/>
    <property type="gene ID" value="AT5G03620"/>
</dbReference>
<dbReference type="GeneID" id="831777"/>
<dbReference type="Gramene" id="AT5G03620.1">
    <property type="protein sequence ID" value="AT5G03620.1"/>
    <property type="gene ID" value="AT5G03620"/>
</dbReference>
<dbReference type="KEGG" id="ath:AT5G03620"/>
<dbReference type="Araport" id="AT5G03620"/>
<dbReference type="TAIR" id="AT5G03620"/>
<dbReference type="eggNOG" id="ENOG502QRA7">
    <property type="taxonomic scope" value="Eukaryota"/>
</dbReference>
<dbReference type="HOGENOM" id="CLU_000625_4_3_1"/>
<dbReference type="InParanoid" id="Q9LZS6"/>
<dbReference type="OMA" id="GRIVYCV"/>
<dbReference type="PhylomeDB" id="Q9LZS6"/>
<dbReference type="PRO" id="PR:Q9LZS6"/>
<dbReference type="Proteomes" id="UP000006548">
    <property type="component" value="Chromosome 5"/>
</dbReference>
<dbReference type="ExpressionAtlas" id="Q9LZS6">
    <property type="expression patterns" value="baseline and differential"/>
</dbReference>
<dbReference type="GO" id="GO:0005576">
    <property type="term" value="C:extracellular region"/>
    <property type="evidence" value="ECO:0007669"/>
    <property type="project" value="UniProtKB-SubCell"/>
</dbReference>
<dbReference type="GO" id="GO:0004252">
    <property type="term" value="F:serine-type endopeptidase activity"/>
    <property type="evidence" value="ECO:0007669"/>
    <property type="project" value="InterPro"/>
</dbReference>
<dbReference type="GO" id="GO:0006508">
    <property type="term" value="P:proteolysis"/>
    <property type="evidence" value="ECO:0007669"/>
    <property type="project" value="UniProtKB-KW"/>
</dbReference>
<dbReference type="CDD" id="cd02120">
    <property type="entry name" value="PA_subtilisin_like"/>
    <property type="match status" value="1"/>
</dbReference>
<dbReference type="CDD" id="cd04852">
    <property type="entry name" value="Peptidases_S8_3"/>
    <property type="match status" value="1"/>
</dbReference>
<dbReference type="FunFam" id="3.40.50.200:FF:000006">
    <property type="entry name" value="Subtilisin-like protease SBT1.5"/>
    <property type="match status" value="1"/>
</dbReference>
<dbReference type="FunFam" id="3.30.70.80:FF:000002">
    <property type="entry name" value="Subtilisin-like protease SBT5.3"/>
    <property type="match status" value="1"/>
</dbReference>
<dbReference type="Gene3D" id="2.60.40.2310">
    <property type="match status" value="1"/>
</dbReference>
<dbReference type="Gene3D" id="3.50.30.30">
    <property type="match status" value="1"/>
</dbReference>
<dbReference type="Gene3D" id="3.30.70.80">
    <property type="entry name" value="Peptidase S8 propeptide/proteinase inhibitor I9"/>
    <property type="match status" value="1"/>
</dbReference>
<dbReference type="Gene3D" id="3.40.50.200">
    <property type="entry name" value="Peptidase S8/S53 domain"/>
    <property type="match status" value="1"/>
</dbReference>
<dbReference type="InterPro" id="IPR000209">
    <property type="entry name" value="Peptidase_S8/S53_dom"/>
</dbReference>
<dbReference type="InterPro" id="IPR036852">
    <property type="entry name" value="Peptidase_S8/S53_dom_sf"/>
</dbReference>
<dbReference type="InterPro" id="IPR023828">
    <property type="entry name" value="Peptidase_S8_Ser-AS"/>
</dbReference>
<dbReference type="InterPro" id="IPR015500">
    <property type="entry name" value="Peptidase_S8_subtilisin-rel"/>
</dbReference>
<dbReference type="InterPro" id="IPR034197">
    <property type="entry name" value="Peptidases_S8_3"/>
</dbReference>
<dbReference type="InterPro" id="IPR010259">
    <property type="entry name" value="S8pro/Inhibitor_I9"/>
</dbReference>
<dbReference type="InterPro" id="IPR037045">
    <property type="entry name" value="S8pro/Inhibitor_I9_sf"/>
</dbReference>
<dbReference type="InterPro" id="IPR045051">
    <property type="entry name" value="SBT"/>
</dbReference>
<dbReference type="InterPro" id="IPR041469">
    <property type="entry name" value="Subtilisin-like_FN3"/>
</dbReference>
<dbReference type="PANTHER" id="PTHR10795">
    <property type="entry name" value="PROPROTEIN CONVERTASE SUBTILISIN/KEXIN"/>
    <property type="match status" value="1"/>
</dbReference>
<dbReference type="Pfam" id="PF17766">
    <property type="entry name" value="fn3_6"/>
    <property type="match status" value="1"/>
</dbReference>
<dbReference type="Pfam" id="PF05922">
    <property type="entry name" value="Inhibitor_I9"/>
    <property type="match status" value="1"/>
</dbReference>
<dbReference type="Pfam" id="PF00082">
    <property type="entry name" value="Peptidase_S8"/>
    <property type="match status" value="1"/>
</dbReference>
<dbReference type="PRINTS" id="PR00723">
    <property type="entry name" value="SUBTILISIN"/>
</dbReference>
<dbReference type="SUPFAM" id="SSF52743">
    <property type="entry name" value="Subtilisin-like"/>
    <property type="match status" value="1"/>
</dbReference>
<dbReference type="PROSITE" id="PS51892">
    <property type="entry name" value="SUBTILASE"/>
    <property type="match status" value="1"/>
</dbReference>
<dbReference type="PROSITE" id="PS00138">
    <property type="entry name" value="SUBTILASE_SER"/>
    <property type="match status" value="1"/>
</dbReference>
<organism>
    <name type="scientific">Arabidopsis thaliana</name>
    <name type="common">Mouse-ear cress</name>
    <dbReference type="NCBI Taxonomy" id="3702"/>
    <lineage>
        <taxon>Eukaryota</taxon>
        <taxon>Viridiplantae</taxon>
        <taxon>Streptophyta</taxon>
        <taxon>Embryophyta</taxon>
        <taxon>Tracheophyta</taxon>
        <taxon>Spermatophyta</taxon>
        <taxon>Magnoliopsida</taxon>
        <taxon>eudicotyledons</taxon>
        <taxon>Gunneridae</taxon>
        <taxon>Pentapetalae</taxon>
        <taxon>rosids</taxon>
        <taxon>malvids</taxon>
        <taxon>Brassicales</taxon>
        <taxon>Brassicaceae</taxon>
        <taxon>Camelineae</taxon>
        <taxon>Arabidopsis</taxon>
    </lineage>
</organism>
<keyword id="KW-0068">Autocatalytic cleavage</keyword>
<keyword id="KW-0325">Glycoprotein</keyword>
<keyword id="KW-0378">Hydrolase</keyword>
<keyword id="KW-0645">Protease</keyword>
<keyword id="KW-1185">Reference proteome</keyword>
<keyword id="KW-0964">Secreted</keyword>
<keyword id="KW-0720">Serine protease</keyword>
<keyword id="KW-0732">Signal</keyword>
<keyword id="KW-0865">Zymogen</keyword>